<gene>
    <name evidence="1" type="primary">yaeH</name>
    <name type="ordered locus">SSPA0210</name>
</gene>
<protein>
    <recommendedName>
        <fullName evidence="1">UPF0325 protein YaeH</fullName>
    </recommendedName>
</protein>
<reference key="1">
    <citation type="journal article" date="2009" name="BMC Genomics">
        <title>Pseudogene accumulation in the evolutionary histories of Salmonella enterica serovars Paratyphi A and Typhi.</title>
        <authorList>
            <person name="Holt K.E."/>
            <person name="Thomson N.R."/>
            <person name="Wain J."/>
            <person name="Langridge G.C."/>
            <person name="Hasan R."/>
            <person name="Bhutta Z.A."/>
            <person name="Quail M.A."/>
            <person name="Norbertczak H."/>
            <person name="Walker D."/>
            <person name="Simmonds M."/>
            <person name="White B."/>
            <person name="Bason N."/>
            <person name="Mungall K."/>
            <person name="Dougan G."/>
            <person name="Parkhill J."/>
        </authorList>
    </citation>
    <scope>NUCLEOTIDE SEQUENCE [LARGE SCALE GENOMIC DNA]</scope>
    <source>
        <strain>AKU_12601</strain>
    </source>
</reference>
<evidence type="ECO:0000255" key="1">
    <source>
        <dbReference type="HAMAP-Rule" id="MF_01519"/>
    </source>
</evidence>
<comment type="similarity">
    <text evidence="1">Belongs to the UPF0325 family.</text>
</comment>
<accession>B5BL91</accession>
<name>YAEH_SALPK</name>
<feature type="chain" id="PRO_1000198441" description="UPF0325 protein YaeH">
    <location>
        <begin position="1"/>
        <end position="128"/>
    </location>
</feature>
<proteinExistence type="inferred from homology"/>
<dbReference type="EMBL" id="FM200053">
    <property type="protein sequence ID" value="CAR58324.1"/>
    <property type="molecule type" value="Genomic_DNA"/>
</dbReference>
<dbReference type="RefSeq" id="WP_000272193.1">
    <property type="nucleotide sequence ID" value="NC_011147.1"/>
</dbReference>
<dbReference type="SMR" id="B5BL91"/>
<dbReference type="KEGG" id="sek:SSPA0210"/>
<dbReference type="HOGENOM" id="CLU_136774_0_0_6"/>
<dbReference type="Proteomes" id="UP000001869">
    <property type="component" value="Chromosome"/>
</dbReference>
<dbReference type="HAMAP" id="MF_01519">
    <property type="entry name" value="UPF0325"/>
    <property type="match status" value="1"/>
</dbReference>
<dbReference type="InterPro" id="IPR020911">
    <property type="entry name" value="UPF0325"/>
</dbReference>
<dbReference type="NCBIfam" id="NF010213">
    <property type="entry name" value="PRK13677.1"/>
    <property type="match status" value="1"/>
</dbReference>
<dbReference type="Pfam" id="PF11944">
    <property type="entry name" value="DUF3461"/>
    <property type="match status" value="1"/>
</dbReference>
<sequence length="128" mass="15094">MYDNLKSLGITNPEEIDRYSLRQEANNDILKIYFQKDRGEFFAKSVKFKYPRQRKTVVADGIGQGYKEVQEISPNLRYVIDELDQICQRDRSELDLKRKILDDLRHLESVVANKISEIEADLDKLTRK</sequence>
<organism>
    <name type="scientific">Salmonella paratyphi A (strain AKU_12601)</name>
    <dbReference type="NCBI Taxonomy" id="554290"/>
    <lineage>
        <taxon>Bacteria</taxon>
        <taxon>Pseudomonadati</taxon>
        <taxon>Pseudomonadota</taxon>
        <taxon>Gammaproteobacteria</taxon>
        <taxon>Enterobacterales</taxon>
        <taxon>Enterobacteriaceae</taxon>
        <taxon>Salmonella</taxon>
    </lineage>
</organism>